<comment type="function">
    <text evidence="2">Antimicrobial peptide. Active against a variety of Gram-negative and Gram-positive bacterial strains. Not active against fungi. Shows very weak hemolytic activity against human erythrocytes.</text>
</comment>
<comment type="subcellular location">
    <subcellularLocation>
        <location evidence="4">Secreted</location>
    </subcellularLocation>
</comment>
<comment type="tissue specificity">
    <text evidence="4">Expressed by the skin glands.</text>
</comment>
<comment type="similarity">
    <text evidence="1">Belongs to the frog skin active peptide (FSAP) family. Brevinin subfamily.</text>
</comment>
<evidence type="ECO:0000255" key="1"/>
<evidence type="ECO:0000269" key="2">
    <source>
    </source>
</evidence>
<evidence type="ECO:0000303" key="3">
    <source>
    </source>
</evidence>
<evidence type="ECO:0000305" key="4">
    <source>
    </source>
</evidence>
<evidence type="ECO:0000312" key="5">
    <source>
        <dbReference type="EMBL" id="ADV36177.1"/>
    </source>
</evidence>
<name>B2SN4_SYLSP</name>
<organism evidence="3">
    <name type="scientific">Sylvirana spinulosa</name>
    <name type="common">Fine-spined frog</name>
    <name type="synonym">Hylarana spinulosa</name>
    <dbReference type="NCBI Taxonomy" id="369515"/>
    <lineage>
        <taxon>Eukaryota</taxon>
        <taxon>Metazoa</taxon>
        <taxon>Chordata</taxon>
        <taxon>Craniata</taxon>
        <taxon>Vertebrata</taxon>
        <taxon>Euteleostomi</taxon>
        <taxon>Amphibia</taxon>
        <taxon>Batrachia</taxon>
        <taxon>Anura</taxon>
        <taxon>Neobatrachia</taxon>
        <taxon>Ranoidea</taxon>
        <taxon>Ranidae</taxon>
        <taxon>Sylvirana</taxon>
    </lineage>
</organism>
<feature type="signal peptide" evidence="1">
    <location>
        <begin position="1"/>
        <end position="22"/>
    </location>
</feature>
<feature type="propeptide" id="PRO_0000439780" description="Removed in mature form" evidence="4">
    <location>
        <begin position="23"/>
        <end position="40"/>
    </location>
</feature>
<feature type="peptide" id="PRO_0000439781" description="Brevinin-2SN4" evidence="3">
    <location>
        <begin position="43"/>
        <end position="72"/>
    </location>
</feature>
<feature type="disulfide bond" evidence="3">
    <location>
        <begin position="66"/>
        <end position="72"/>
    </location>
</feature>
<dbReference type="EMBL" id="HQ735154">
    <property type="protein sequence ID" value="ADV36177.1"/>
    <property type="molecule type" value="mRNA"/>
</dbReference>
<dbReference type="GO" id="GO:0005576">
    <property type="term" value="C:extracellular region"/>
    <property type="evidence" value="ECO:0007669"/>
    <property type="project" value="UniProtKB-SubCell"/>
</dbReference>
<dbReference type="GO" id="GO:0050829">
    <property type="term" value="P:defense response to Gram-negative bacterium"/>
    <property type="evidence" value="ECO:0000314"/>
    <property type="project" value="UniProtKB"/>
</dbReference>
<dbReference type="GO" id="GO:0050830">
    <property type="term" value="P:defense response to Gram-positive bacterium"/>
    <property type="evidence" value="ECO:0000314"/>
    <property type="project" value="UniProtKB"/>
</dbReference>
<dbReference type="GO" id="GO:0044179">
    <property type="term" value="P:hemolysis in another organism"/>
    <property type="evidence" value="ECO:0000314"/>
    <property type="project" value="UniProtKB"/>
</dbReference>
<dbReference type="InterPro" id="IPR012521">
    <property type="entry name" value="Antimicrobial_frog_2"/>
</dbReference>
<dbReference type="InterPro" id="IPR004275">
    <property type="entry name" value="Frog_antimicrobial_propeptide"/>
</dbReference>
<dbReference type="Pfam" id="PF08023">
    <property type="entry name" value="Antimicrobial_2"/>
    <property type="match status" value="1"/>
</dbReference>
<dbReference type="Pfam" id="PF03032">
    <property type="entry name" value="FSAP_sig_propep"/>
    <property type="match status" value="1"/>
</dbReference>
<accession>E7EKH7</accession>
<reference evidence="5" key="1">
    <citation type="journal article" date="2013" name="Biochimie">
        <title>Identification of multiple antimicrobial peptides from the skin of fine-spined frog, Hylarana spinulosa (Ranidae).</title>
        <authorList>
            <person name="Yang X."/>
            <person name="Hu Y."/>
            <person name="Xu S."/>
            <person name="Hu Y."/>
            <person name="Meng H."/>
            <person name="Guo C."/>
            <person name="Liu Y."/>
            <person name="Liu J."/>
            <person name="Yu Z."/>
            <person name="Wang H."/>
        </authorList>
    </citation>
    <scope>NUCLEOTIDE SEQUENCE [MRNA]</scope>
    <scope>FUNCTION</scope>
    <scope>SYNTHESIS</scope>
    <source>
        <tissue evidence="3">Skin</tissue>
    </source>
</reference>
<protein>
    <recommendedName>
        <fullName evidence="3">Brevinin-2SN4</fullName>
    </recommendedName>
</protein>
<proteinExistence type="inferred from homology"/>
<sequence>MFTMKKPMLLLFFLGMISMSLCQDERGADEDDGGEMTEEEKRGAFGDLLKGVAKEAGLKLLNMAQCKLSGNC</sequence>
<keyword id="KW-0878">Amphibian defense peptide</keyword>
<keyword id="KW-0044">Antibiotic</keyword>
<keyword id="KW-0929">Antimicrobial</keyword>
<keyword id="KW-0165">Cleavage on pair of basic residues</keyword>
<keyword id="KW-0204">Cytolysis</keyword>
<keyword id="KW-1015">Disulfide bond</keyword>
<keyword id="KW-0354">Hemolysis</keyword>
<keyword id="KW-0964">Secreted</keyword>
<keyword id="KW-0732">Signal</keyword>